<name>SLA_PROFL</name>
<reference key="1">
    <citation type="journal article" date="1995" name="J. Biochem.">
        <title>Blood coagulation factor IX-binding protein from the venom of Trimeresurus flavoviridis: purification and characterization.</title>
        <authorList>
            <person name="Atoda H."/>
            <person name="Ishikawa M."/>
            <person name="Yoshihara E."/>
            <person name="Sekiya F."/>
            <person name="Morita T."/>
        </authorList>
    </citation>
    <scope>PROTEIN SEQUENCE</scope>
    <scope>FUNCTION</scope>
    <scope>SUBUNIT</scope>
    <scope>SUBCELLULAR LOCATION</scope>
    <source>
        <tissue>Venom</tissue>
    </source>
</reference>
<reference key="2">
    <citation type="journal article" date="1999" name="J. Mol. Biol.">
        <title>Crystal structure of coagulation factor IX-binding protein from habu snake venom at 2.6 A: implication of central loop swapping based on deletion in the linker region.</title>
        <authorList>
            <person name="Mizuno H."/>
            <person name="Fujimoto Z."/>
            <person name="Koizumi M."/>
            <person name="Kano H."/>
            <person name="Atoda H."/>
            <person name="Morita T."/>
        </authorList>
    </citation>
    <scope>X-RAY CRYSTALLOGRAPHY (2.6 ANGSTROMS)</scope>
    <scope>METAL-BINDING SITES</scope>
    <scope>DISULFIDE BONDS</scope>
    <source>
        <tissue>Venom</tissue>
    </source>
</reference>
<reference key="3">
    <citation type="journal article" date="2003" name="J. Biol. Chem.">
        <title>Crystal structure of Mg2+- and Ca2+-bound Gla domain of factor IX complexed with binding protein.</title>
        <authorList>
            <person name="Shikamoto Y."/>
            <person name="Morita T."/>
            <person name="Fujimoto Z."/>
            <person name="Mizuno H."/>
        </authorList>
    </citation>
    <scope>X-RAY CRYSTALLOGRAPHY (1.55 ANGSTROMS) IN COMPLEX WITH IX/X-BP SUBUNIT B AND COAGULATION FACTOR IX</scope>
    <scope>FUNCTION</scope>
    <scope>SUBUNIT</scope>
    <scope>METAL-BINDING SITES</scope>
    <scope>DISULFIDE BOND</scope>
    <source>
        <tissue>Venom</tissue>
    </source>
</reference>
<reference key="4">
    <citation type="journal article" date="2005" name="J. Mol. Biol.">
        <title>pH-dependent structural changes at Ca(2+)-binding sites of coagulation factor IX-binding protein.</title>
        <authorList>
            <person name="Suzuki N."/>
            <person name="Fujimoto Z."/>
            <person name="Morita T."/>
            <person name="Fukamizu A."/>
            <person name="Mizuno H."/>
        </authorList>
    </citation>
    <scope>X-RAY CRYSTALLOGRAPHY (1.72 ANGSTROMS)</scope>
    <scope>METAL-BINDING SITES</scope>
    <scope>DISULFIDE BONDS</scope>
    <source>
        <tissue>Venom</tissue>
    </source>
</reference>
<sequence length="129" mass="14640">DCPSGWSSYEGHCYKPFKLYKTWDDAERFCTEQAKGGHLVSIESAGEADFVAQLVTENIQNTKSYVWIGLRVQGKEKQCSSEWSDGSSVSYENWIEAESKTCLGLEKETGFRKWVNIYCGQQNPFVCEA</sequence>
<keyword id="KW-0002">3D-structure</keyword>
<keyword id="KW-1203">Blood coagulation cascade inhibiting toxin</keyword>
<keyword id="KW-0106">Calcium</keyword>
<keyword id="KW-0903">Direct protein sequencing</keyword>
<keyword id="KW-1015">Disulfide bond</keyword>
<keyword id="KW-1199">Hemostasis impairing toxin</keyword>
<keyword id="KW-0479">Metal-binding</keyword>
<keyword id="KW-0964">Secreted</keyword>
<keyword id="KW-0800">Toxin</keyword>
<dbReference type="PIR" id="JC4329">
    <property type="entry name" value="JC4329"/>
</dbReference>
<dbReference type="PDB" id="1BJ3">
    <property type="method" value="X-ray"/>
    <property type="resolution" value="2.60 A"/>
    <property type="chains" value="A=1-129"/>
</dbReference>
<dbReference type="PDB" id="1J34">
    <property type="method" value="X-ray"/>
    <property type="resolution" value="1.55 A"/>
    <property type="chains" value="A=1-129"/>
</dbReference>
<dbReference type="PDB" id="1J35">
    <property type="method" value="X-ray"/>
    <property type="resolution" value="1.80 A"/>
    <property type="chains" value="A=1-129"/>
</dbReference>
<dbReference type="PDB" id="1X2T">
    <property type="method" value="X-ray"/>
    <property type="resolution" value="1.72 A"/>
    <property type="chains" value="A/C=1-129"/>
</dbReference>
<dbReference type="PDB" id="1X2W">
    <property type="method" value="X-ray"/>
    <property type="resolution" value="2.29 A"/>
    <property type="chains" value="A=1-129"/>
</dbReference>
<dbReference type="PDBsum" id="1BJ3"/>
<dbReference type="PDBsum" id="1J34"/>
<dbReference type="PDBsum" id="1J35"/>
<dbReference type="PDBsum" id="1X2T"/>
<dbReference type="PDBsum" id="1X2W"/>
<dbReference type="SMR" id="Q7LZ71"/>
<dbReference type="EvolutionaryTrace" id="Q7LZ71"/>
<dbReference type="GO" id="GO:0005576">
    <property type="term" value="C:extracellular region"/>
    <property type="evidence" value="ECO:0007669"/>
    <property type="project" value="UniProtKB-SubCell"/>
</dbReference>
<dbReference type="GO" id="GO:0005509">
    <property type="term" value="F:calcium ion binding"/>
    <property type="evidence" value="ECO:0000314"/>
    <property type="project" value="UniProtKB"/>
</dbReference>
<dbReference type="GO" id="GO:0090729">
    <property type="term" value="F:toxin activity"/>
    <property type="evidence" value="ECO:0007669"/>
    <property type="project" value="UniProtKB-KW"/>
</dbReference>
<dbReference type="FunFam" id="3.10.100.10:FF:000087">
    <property type="entry name" value="Snaclec rhodocetin subunit delta"/>
    <property type="match status" value="1"/>
</dbReference>
<dbReference type="Gene3D" id="3.10.100.10">
    <property type="entry name" value="Mannose-Binding Protein A, subunit A"/>
    <property type="match status" value="1"/>
</dbReference>
<dbReference type="InterPro" id="IPR001304">
    <property type="entry name" value="C-type_lectin-like"/>
</dbReference>
<dbReference type="InterPro" id="IPR016186">
    <property type="entry name" value="C-type_lectin-like/link_sf"/>
</dbReference>
<dbReference type="InterPro" id="IPR050111">
    <property type="entry name" value="C-type_lectin/snaclec_domain"/>
</dbReference>
<dbReference type="InterPro" id="IPR018378">
    <property type="entry name" value="C-type_lectin_CS"/>
</dbReference>
<dbReference type="InterPro" id="IPR016187">
    <property type="entry name" value="CTDL_fold"/>
</dbReference>
<dbReference type="PANTHER" id="PTHR22803">
    <property type="entry name" value="MANNOSE, PHOSPHOLIPASE, LECTIN RECEPTOR RELATED"/>
    <property type="match status" value="1"/>
</dbReference>
<dbReference type="Pfam" id="PF00059">
    <property type="entry name" value="Lectin_C"/>
    <property type="match status" value="1"/>
</dbReference>
<dbReference type="SMART" id="SM00034">
    <property type="entry name" value="CLECT"/>
    <property type="match status" value="1"/>
</dbReference>
<dbReference type="SUPFAM" id="SSF56436">
    <property type="entry name" value="C-type lectin-like"/>
    <property type="match status" value="1"/>
</dbReference>
<dbReference type="PROSITE" id="PS00615">
    <property type="entry name" value="C_TYPE_LECTIN_1"/>
    <property type="match status" value="1"/>
</dbReference>
<dbReference type="PROSITE" id="PS50041">
    <property type="entry name" value="C_TYPE_LECTIN_2"/>
    <property type="match status" value="1"/>
</dbReference>
<accession>Q7LZ71</accession>
<protein>
    <recommendedName>
        <fullName>Snaclec coagulation factor IX-binding protein subunit A</fullName>
        <shortName>IX-bp subunit A</shortName>
    </recommendedName>
</protein>
<proteinExistence type="evidence at protein level"/>
<evidence type="ECO:0000255" key="1">
    <source>
        <dbReference type="PROSITE-ProRule" id="PRU00040"/>
    </source>
</evidence>
<evidence type="ECO:0000269" key="2">
    <source>
    </source>
</evidence>
<evidence type="ECO:0000269" key="3">
    <source>
    </source>
</evidence>
<evidence type="ECO:0000269" key="4">
    <source>
    </source>
</evidence>
<evidence type="ECO:0000269" key="5">
    <source>
    </source>
</evidence>
<evidence type="ECO:0000305" key="6"/>
<evidence type="ECO:0007744" key="7">
    <source>
        <dbReference type="PDB" id="1BJ3"/>
    </source>
</evidence>
<evidence type="ECO:0007744" key="8">
    <source>
        <dbReference type="PDB" id="1J34"/>
    </source>
</evidence>
<evidence type="ECO:0007744" key="9">
    <source>
        <dbReference type="PDB" id="1J35"/>
    </source>
</evidence>
<evidence type="ECO:0007744" key="10">
    <source>
        <dbReference type="PDB" id="1X2T"/>
    </source>
</evidence>
<evidence type="ECO:0007744" key="11">
    <source>
        <dbReference type="PDB" id="1X2W"/>
    </source>
</evidence>
<evidence type="ECO:0007829" key="12">
    <source>
        <dbReference type="PDB" id="1J34"/>
    </source>
</evidence>
<evidence type="ECO:0007829" key="13">
    <source>
        <dbReference type="PDB" id="1J35"/>
    </source>
</evidence>
<feature type="chain" id="PRO_0000346754" description="Snaclec coagulation factor IX-binding protein subunit A">
    <location>
        <begin position="1"/>
        <end position="129"/>
    </location>
</feature>
<feature type="domain" description="C-type lectin" evidence="1">
    <location>
        <begin position="1"/>
        <end position="129"/>
    </location>
</feature>
<feature type="binding site" evidence="2 3 4 7 8 9 10">
    <location>
        <position position="41"/>
    </location>
    <ligand>
        <name>Ca(2+)</name>
        <dbReference type="ChEBI" id="CHEBI:29108"/>
    </ligand>
</feature>
<feature type="binding site" evidence="2 3 4 7 8 9 10">
    <location>
        <position position="43"/>
    </location>
    <ligand>
        <name>Ca(2+)</name>
        <dbReference type="ChEBI" id="CHEBI:29108"/>
    </ligand>
</feature>
<feature type="binding site" evidence="2 3 4 7 8 9 10">
    <location>
        <position position="47"/>
    </location>
    <ligand>
        <name>Ca(2+)</name>
        <dbReference type="ChEBI" id="CHEBI:29108"/>
    </ligand>
</feature>
<feature type="binding site" evidence="2 3 4 7 8 9 10">
    <location>
        <position position="128"/>
    </location>
    <ligand>
        <name>Ca(2+)</name>
        <dbReference type="ChEBI" id="CHEBI:29108"/>
    </ligand>
</feature>
<feature type="disulfide bond" evidence="2 3 4 7 8 9 10 11">
    <location>
        <begin position="2"/>
        <end position="13"/>
    </location>
</feature>
<feature type="disulfide bond" evidence="2 3 4 7 8 9 10 11">
    <location>
        <begin position="30"/>
        <end position="127"/>
    </location>
</feature>
<feature type="disulfide bond" description="Interchain (with C-98 in subunit B)" evidence="3">
    <location>
        <position position="79"/>
    </location>
</feature>
<feature type="disulfide bond" evidence="2 3 4 7 8 9 10 11">
    <location>
        <begin position="102"/>
        <end position="119"/>
    </location>
</feature>
<feature type="strand" evidence="12">
    <location>
        <begin position="7"/>
        <end position="9"/>
    </location>
</feature>
<feature type="strand" evidence="12">
    <location>
        <begin position="12"/>
        <end position="21"/>
    </location>
</feature>
<feature type="helix" evidence="12">
    <location>
        <begin position="23"/>
        <end position="33"/>
    </location>
</feature>
<feature type="helix" evidence="12">
    <location>
        <begin position="45"/>
        <end position="58"/>
    </location>
</feature>
<feature type="strand" evidence="13">
    <location>
        <begin position="62"/>
        <end position="64"/>
    </location>
</feature>
<feature type="strand" evidence="12">
    <location>
        <begin position="66"/>
        <end position="72"/>
    </location>
</feature>
<feature type="strand" evidence="13">
    <location>
        <begin position="77"/>
        <end position="80"/>
    </location>
</feature>
<feature type="helix" evidence="12">
    <location>
        <begin position="96"/>
        <end position="98"/>
    </location>
</feature>
<feature type="strand" evidence="12">
    <location>
        <begin position="102"/>
        <end position="105"/>
    </location>
</feature>
<feature type="helix" evidence="12">
    <location>
        <begin position="107"/>
        <end position="109"/>
    </location>
</feature>
<feature type="strand" evidence="12">
    <location>
        <begin position="113"/>
        <end position="117"/>
    </location>
</feature>
<feature type="strand" evidence="12">
    <location>
        <begin position="123"/>
        <end position="129"/>
    </location>
</feature>
<comment type="function">
    <text evidence="3 5">Anticoagulant protein which binds to the gamma-carboxyglutamic acid-domain regions of factor IX (F9) (but not factor X) in the presence of calcium with a 1 to 1 stoichiometry.</text>
</comment>
<comment type="subunit">
    <text evidence="2 3 4 5">Heterodimer of subunits A and B; disulfide-linked.</text>
</comment>
<comment type="subcellular location">
    <subcellularLocation>
        <location evidence="6">Secreted</location>
    </subcellularLocation>
</comment>
<comment type="tissue specificity">
    <text>Expressed by the venom gland.</text>
</comment>
<comment type="similarity">
    <text evidence="6">Belongs to the snaclec family.</text>
</comment>
<organism>
    <name type="scientific">Protobothrops flavoviridis</name>
    <name type="common">Habu</name>
    <name type="synonym">Trimeresurus flavoviridis</name>
    <dbReference type="NCBI Taxonomy" id="88087"/>
    <lineage>
        <taxon>Eukaryota</taxon>
        <taxon>Metazoa</taxon>
        <taxon>Chordata</taxon>
        <taxon>Craniata</taxon>
        <taxon>Vertebrata</taxon>
        <taxon>Euteleostomi</taxon>
        <taxon>Lepidosauria</taxon>
        <taxon>Squamata</taxon>
        <taxon>Bifurcata</taxon>
        <taxon>Unidentata</taxon>
        <taxon>Episquamata</taxon>
        <taxon>Toxicofera</taxon>
        <taxon>Serpentes</taxon>
        <taxon>Colubroidea</taxon>
        <taxon>Viperidae</taxon>
        <taxon>Crotalinae</taxon>
        <taxon>Protobothrops</taxon>
    </lineage>
</organism>